<organism>
    <name type="scientific">Mycolicibacterium smegmatis (strain ATCC 700084 / mc(2)155)</name>
    <name type="common">Mycobacterium smegmatis</name>
    <dbReference type="NCBI Taxonomy" id="246196"/>
    <lineage>
        <taxon>Bacteria</taxon>
        <taxon>Bacillati</taxon>
        <taxon>Actinomycetota</taxon>
        <taxon>Actinomycetes</taxon>
        <taxon>Mycobacteriales</taxon>
        <taxon>Mycobacteriaceae</taxon>
        <taxon>Mycolicibacterium</taxon>
    </lineage>
</organism>
<reference evidence="8" key="1">
    <citation type="submission" date="2006-10" db="EMBL/GenBank/DDBJ databases">
        <authorList>
            <person name="Fleischmann R.D."/>
            <person name="Dodson R.J."/>
            <person name="Haft D.H."/>
            <person name="Merkel J.S."/>
            <person name="Nelson W.C."/>
            <person name="Fraser C.M."/>
        </authorList>
    </citation>
    <scope>NUCLEOTIDE SEQUENCE [LARGE SCALE GENOMIC DNA]</scope>
    <source>
        <strain>ATCC 700084 / mc(2)155</strain>
    </source>
</reference>
<reference evidence="9" key="2">
    <citation type="journal article" date="2007" name="Genome Biol.">
        <title>Interrupted coding sequences in Mycobacterium smegmatis: authentic mutations or sequencing errors?</title>
        <authorList>
            <person name="Deshayes C."/>
            <person name="Perrodou E."/>
            <person name="Gallien S."/>
            <person name="Euphrasie D."/>
            <person name="Schaeffer C."/>
            <person name="Van-Dorsselaer A."/>
            <person name="Poch O."/>
            <person name="Lecompte O."/>
            <person name="Reyrat J.-M."/>
        </authorList>
    </citation>
    <scope>NUCLEOTIDE SEQUENCE [LARGE SCALE GENOMIC DNA]</scope>
    <source>
        <strain>ATCC 700084 / mc(2)155</strain>
    </source>
</reference>
<reference evidence="9" key="3">
    <citation type="journal article" date="2009" name="Genome Res.">
        <title>Ortho-proteogenomics: multiple proteomes investigation through orthology and a new MS-based protocol.</title>
        <authorList>
            <person name="Gallien S."/>
            <person name="Perrodou E."/>
            <person name="Carapito C."/>
            <person name="Deshayes C."/>
            <person name="Reyrat J.-M."/>
            <person name="Van Dorsselaer A."/>
            <person name="Poch O."/>
            <person name="Schaeffer C."/>
            <person name="Lecompte O."/>
        </authorList>
    </citation>
    <scope>NUCLEOTIDE SEQUENCE [LARGE SCALE GENOMIC DNA]</scope>
    <source>
        <strain>ATCC 700084 / mc(2)155</strain>
    </source>
</reference>
<reference key="4">
    <citation type="journal article" date="2015" name="Tuberculosis">
        <title>The mycobacterial PhoH2 proteins are type II toxin antitoxins coupled to RNA helicase domains.</title>
        <authorList>
            <person name="Andrews E.S."/>
            <person name="Arcus V.L."/>
        </authorList>
    </citation>
    <scope>IDENTIFICATION BY MASS SPECTROMETRY</scope>
    <scope>FUNCTION AS AN ATPASE</scope>
    <scope>BIOPHYSICOCHEMICAL PROPERTIES</scope>
    <scope>SUBUNIT</scope>
    <scope>OPERON STRUCTURE</scope>
    <scope>DOMAIN</scope>
    <scope>DISRUPTION PHENOTYPE</scope>
    <scope>MUTAGENESIS OF ARG-280 AND ARG-339</scope>
    <source>
        <strain>ATCC 700084 / mc(2)155</strain>
    </source>
</reference>
<reference key="5">
    <citation type="journal article" date="2024" name="Braz. J. Microbiol.">
        <title>Structural and functional characterization of mycobacterial PhoH2 and identification of potential inhibitor of its enzymatic activity.</title>
        <authorList>
            <person name="Shivangi X."/>
            <person name="Khan Y."/>
            <person name="Ekka M.K."/>
            <person name="Meena L.S."/>
        </authorList>
    </citation>
    <scope>DISRUPTION PHENOTYPE</scope>
    <source>
        <strain>ATCC 700084 / mc(2)155</strain>
    </source>
</reference>
<dbReference type="EC" id="3.1.-.-" evidence="7"/>
<dbReference type="EC" id="5.6.2.5" evidence="7"/>
<dbReference type="EMBL" id="CP000480">
    <property type="protein sequence ID" value="ABK75958.1"/>
    <property type="molecule type" value="Genomic_DNA"/>
</dbReference>
<dbReference type="EMBL" id="CP001663">
    <property type="protein sequence ID" value="AFP41553.1"/>
    <property type="molecule type" value="Genomic_DNA"/>
</dbReference>
<dbReference type="RefSeq" id="WP_011730413.1">
    <property type="nucleotide sequence ID" value="NZ_SIJM01000014.1"/>
</dbReference>
<dbReference type="RefSeq" id="YP_889493.1">
    <property type="nucleotide sequence ID" value="NC_008596.1"/>
</dbReference>
<dbReference type="SMR" id="A0R2V5"/>
<dbReference type="STRING" id="246196.MSMEG_5247"/>
<dbReference type="PaxDb" id="246196-MSMEI_5109"/>
<dbReference type="KEGG" id="msg:MSMEI_5109"/>
<dbReference type="KEGG" id="msm:MSMEG_5247"/>
<dbReference type="PATRIC" id="fig|246196.19.peg.5118"/>
<dbReference type="eggNOG" id="COG1875">
    <property type="taxonomic scope" value="Bacteria"/>
</dbReference>
<dbReference type="OrthoDB" id="9805148at2"/>
<dbReference type="Proteomes" id="UP000000757">
    <property type="component" value="Chromosome"/>
</dbReference>
<dbReference type="Proteomes" id="UP000006158">
    <property type="component" value="Chromosome"/>
</dbReference>
<dbReference type="GO" id="GO:0005829">
    <property type="term" value="C:cytosol"/>
    <property type="evidence" value="ECO:0007669"/>
    <property type="project" value="TreeGrafter"/>
</dbReference>
<dbReference type="GO" id="GO:0005524">
    <property type="term" value="F:ATP binding"/>
    <property type="evidence" value="ECO:0007669"/>
    <property type="project" value="UniProtKB-KW"/>
</dbReference>
<dbReference type="GO" id="GO:0005525">
    <property type="term" value="F:GTP binding"/>
    <property type="evidence" value="ECO:0007669"/>
    <property type="project" value="UniProtKB-KW"/>
</dbReference>
<dbReference type="GO" id="GO:0016853">
    <property type="term" value="F:isomerase activity"/>
    <property type="evidence" value="ECO:0007669"/>
    <property type="project" value="UniProtKB-KW"/>
</dbReference>
<dbReference type="GO" id="GO:0046872">
    <property type="term" value="F:metal ion binding"/>
    <property type="evidence" value="ECO:0007669"/>
    <property type="project" value="UniProtKB-KW"/>
</dbReference>
<dbReference type="GO" id="GO:0004518">
    <property type="term" value="F:nuclease activity"/>
    <property type="evidence" value="ECO:0007669"/>
    <property type="project" value="UniProtKB-KW"/>
</dbReference>
<dbReference type="CDD" id="cd09883">
    <property type="entry name" value="PIN_VapC_PhoHL-ATPase"/>
    <property type="match status" value="1"/>
</dbReference>
<dbReference type="FunFam" id="3.40.50.1010:FF:000005">
    <property type="entry name" value="ATP-binding protein"/>
    <property type="match status" value="1"/>
</dbReference>
<dbReference type="FunFam" id="3.40.50.300:FF:000215">
    <property type="entry name" value="ATP-binding protein"/>
    <property type="match status" value="1"/>
</dbReference>
<dbReference type="Gene3D" id="3.40.50.1010">
    <property type="entry name" value="5'-nuclease"/>
    <property type="match status" value="1"/>
</dbReference>
<dbReference type="Gene3D" id="3.40.50.300">
    <property type="entry name" value="P-loop containing nucleotide triphosphate hydrolases"/>
    <property type="match status" value="1"/>
</dbReference>
<dbReference type="InterPro" id="IPR027417">
    <property type="entry name" value="P-loop_NTPase"/>
</dbReference>
<dbReference type="InterPro" id="IPR003714">
    <property type="entry name" value="PhoH"/>
</dbReference>
<dbReference type="InterPro" id="IPR051451">
    <property type="entry name" value="PhoH2-like"/>
</dbReference>
<dbReference type="InterPro" id="IPR029060">
    <property type="entry name" value="PIN-like_dom_sf"/>
</dbReference>
<dbReference type="InterPro" id="IPR002716">
    <property type="entry name" value="PIN_dom"/>
</dbReference>
<dbReference type="PANTHER" id="PTHR30473:SF2">
    <property type="entry name" value="PIN DOMAIN-CONTAINING PROTEIN"/>
    <property type="match status" value="1"/>
</dbReference>
<dbReference type="PANTHER" id="PTHR30473">
    <property type="entry name" value="PROTEIN PHOH"/>
    <property type="match status" value="1"/>
</dbReference>
<dbReference type="Pfam" id="PF02562">
    <property type="entry name" value="PhoH"/>
    <property type="match status" value="1"/>
</dbReference>
<dbReference type="Pfam" id="PF13638">
    <property type="entry name" value="PIN_4"/>
    <property type="match status" value="1"/>
</dbReference>
<dbReference type="SMART" id="SM00670">
    <property type="entry name" value="PINc"/>
    <property type="match status" value="1"/>
</dbReference>
<dbReference type="SUPFAM" id="SSF52540">
    <property type="entry name" value="P-loop containing nucleoside triphosphate hydrolases"/>
    <property type="match status" value="1"/>
</dbReference>
<dbReference type="SUPFAM" id="SSF88723">
    <property type="entry name" value="PIN domain-like"/>
    <property type="match status" value="1"/>
</dbReference>
<protein>
    <recommendedName>
        <fullName evidence="5">Protein PhoH2</fullName>
        <ecNumber evidence="7">3.1.-.-</ecNumber>
        <ecNumber evidence="7">5.6.2.5</ecNumber>
    </recommendedName>
    <alternativeName>
        <fullName evidence="6">RNA 5'-3' helicase PhoH2</fullName>
    </alternativeName>
    <alternativeName>
        <fullName evidence="6">Toxin PhoP2</fullName>
    </alternativeName>
</protein>
<keyword id="KW-0067">ATP-binding</keyword>
<keyword id="KW-0342">GTP-binding</keyword>
<keyword id="KW-0378">Hydrolase</keyword>
<keyword id="KW-0413">Isomerase</keyword>
<keyword id="KW-0460">Magnesium</keyword>
<keyword id="KW-0479">Metal-binding</keyword>
<keyword id="KW-0540">Nuclease</keyword>
<keyword id="KW-0547">Nucleotide-binding</keyword>
<keyword id="KW-1185">Reference proteome</keyword>
<keyword id="KW-1277">Toxin-antitoxin system</keyword>
<evidence type="ECO:0000250" key="1">
    <source>
        <dbReference type="UniProtKB" id="O53443"/>
    </source>
</evidence>
<evidence type="ECO:0000255" key="2"/>
<evidence type="ECO:0000269" key="3">
    <source>
    </source>
</evidence>
<evidence type="ECO:0000269" key="4">
    <source>
    </source>
</evidence>
<evidence type="ECO:0000303" key="5">
    <source>
    </source>
</evidence>
<evidence type="ECO:0000305" key="6"/>
<evidence type="ECO:0000305" key="7">
    <source>
    </source>
</evidence>
<evidence type="ECO:0000312" key="8">
    <source>
        <dbReference type="EMBL" id="ABK75958.1"/>
    </source>
</evidence>
<evidence type="ECO:0000312" key="9">
    <source>
        <dbReference type="EMBL" id="AFP41553.1"/>
    </source>
</evidence>
<proteinExistence type="evidence at protein level"/>
<comment type="function">
    <text evidence="1 3">Toxic component of a type II toxin-antitoxin (TA) system. The possible cognate antitoxin is PhoAT; the toxin gene can be expressed in the absence of the antitoxin gene in an endogenous mc(2)155 double deletion (PubMed:25999286). Unwinds and/or cleaves 5'-tailed RNA in vitro that starts with 5'-AC, the reaction requires hydrolyzable ATP; double-stranded (ds)RNA and dsDNA are not unwound or cleaved (PubMed:25999286). Has ATPase and GTPase activities (By similarity).</text>
</comment>
<comment type="catalytic activity">
    <reaction evidence="7">
        <text>n ATP + n H2O + wound RNA = n ADP + n phosphate + unwound RNA.</text>
        <dbReference type="EC" id="5.6.2.5"/>
    </reaction>
</comment>
<comment type="catalytic activity">
    <reaction evidence="3">
        <text>ATP + H2O = ADP + phosphate + H(+)</text>
        <dbReference type="Rhea" id="RHEA:13065"/>
        <dbReference type="ChEBI" id="CHEBI:15377"/>
        <dbReference type="ChEBI" id="CHEBI:15378"/>
        <dbReference type="ChEBI" id="CHEBI:30616"/>
        <dbReference type="ChEBI" id="CHEBI:43474"/>
        <dbReference type="ChEBI" id="CHEBI:456216"/>
    </reaction>
</comment>
<comment type="catalytic activity">
    <reaction evidence="1">
        <text>GTP + H2O = GDP + phosphate + H(+)</text>
        <dbReference type="Rhea" id="RHEA:19669"/>
        <dbReference type="ChEBI" id="CHEBI:15377"/>
        <dbReference type="ChEBI" id="CHEBI:15378"/>
        <dbReference type="ChEBI" id="CHEBI:37565"/>
        <dbReference type="ChEBI" id="CHEBI:43474"/>
        <dbReference type="ChEBI" id="CHEBI:58189"/>
    </reaction>
</comment>
<comment type="cofactor">
    <cofactor evidence="1">
        <name>Mg(2+)</name>
        <dbReference type="ChEBI" id="CHEBI:18420"/>
    </cofactor>
</comment>
<comment type="biophysicochemical properties">
    <kinetics>
        <KM evidence="3">8.8 uM for ATP</KM>
    </kinetics>
</comment>
<comment type="subunit">
    <text evidence="3">Interacts with antitoxin PhoAT (PubMed:25999286).</text>
</comment>
<comment type="induction">
    <text evidence="3">Part of the phoAT-phoH2 operon (PubMed:25999286).</text>
</comment>
<comment type="domain">
    <text evidence="7">Has an N-terminal PINc domain and a C-terminal PhoH domain, suggesting it has RNase and nucleotide hydrolysis activities (PubMed:25999286).</text>
</comment>
<comment type="disruption phenotype">
    <text evidence="3 4">Knockdown of expression using antisense RNA decreases the growth rate about 10% in liquid media (PubMed:38386260). Deletion of the phoAT-phoH2 genes has no visible growth phenotype in liquid media (PubMed:25999286).</text>
</comment>
<comment type="similarity">
    <text evidence="6">In the N-terminal section; belongs to the PINc/VapC protein family.</text>
</comment>
<comment type="similarity">
    <text evidence="6">In the C-terminal section; belongs to the PhoH family.</text>
</comment>
<feature type="chain" id="PRO_0000460847" description="Protein PhoH2">
    <location>
        <begin position="1"/>
        <end position="437"/>
    </location>
</feature>
<feature type="domain" description="PINc" evidence="2">
    <location>
        <begin position="7"/>
        <end position="134"/>
    </location>
</feature>
<feature type="mutagenesis site" description="Protein is unstable and cannot be purified." evidence="3">
    <original>R</original>
    <variation>A</variation>
    <location>
        <position position="280"/>
    </location>
</feature>
<feature type="mutagenesis site" description="No longer unwinds or cleaves 5'-tailed RNA, decreased ATPase activity." evidence="3">
    <original>R</original>
    <variation>A</variation>
    <location>
        <position position="339"/>
    </location>
</feature>
<accession>A0R2V5</accession>
<accession>I7FRV6</accession>
<name>PHOH2_MYCS2</name>
<gene>
    <name evidence="5" type="primary">phoH2</name>
    <name evidence="8" type="ordered locus">MSMEG_5247</name>
    <name evidence="9" type="ordered locus">MSMEI_5109</name>
</gene>
<sequence length="437" mass="47170">MTEQAVRTYVLDTSVLLSDPWACTRFAEHEVVVPLVVISELEAKRHHHELGWFARQALRMFDDMRLEHGRLDQPVPVGTQGGTLHVELNHSDPSVLPAGFRNDSNDARILTVAANLAAEGKHVTLVSKDIPLRVKAGAVGLAADEYHAQDVVVSGWTGMTEMDVAGEDIDTLFADGEIDLAEARDLPCHTGIRLLGGTSHALGRVNAAKKVQLVRGDREVFGLRGRSAEQRVALDLLLDESVGIVSLGGKAGTGKSALALCAGLEAVLERRTQRKVVVFRPLYAVGGQDLGYLPGSESEKMGPWAQAVFDTLEGLASPAVLDEVLSRGMLEVLPLTHIRGRSLHDSFVIVDEAQSLERNVLLTVLSRLGAGSRVVLTHDVAQRDNLRVGRHDGVAAVIEKLKGHPLFAHVTLQRSERSPIAALVTEMLEEISPGALP</sequence>